<name>PURL_NOVAD</name>
<organism>
    <name type="scientific">Novosphingobium aromaticivorans (strain ATCC 700278 / DSM 12444 / CCUG 56034 / CIP 105152 / NBRC 16084 / F199)</name>
    <dbReference type="NCBI Taxonomy" id="279238"/>
    <lineage>
        <taxon>Bacteria</taxon>
        <taxon>Pseudomonadati</taxon>
        <taxon>Pseudomonadota</taxon>
        <taxon>Alphaproteobacteria</taxon>
        <taxon>Sphingomonadales</taxon>
        <taxon>Sphingomonadaceae</taxon>
        <taxon>Novosphingobium</taxon>
    </lineage>
</organism>
<keyword id="KW-0067">ATP-binding</keyword>
<keyword id="KW-0963">Cytoplasm</keyword>
<keyword id="KW-0436">Ligase</keyword>
<keyword id="KW-0460">Magnesium</keyword>
<keyword id="KW-0479">Metal-binding</keyword>
<keyword id="KW-0547">Nucleotide-binding</keyword>
<keyword id="KW-0658">Purine biosynthesis</keyword>
<keyword id="KW-1185">Reference proteome</keyword>
<sequence length="719" mass="76494">MSQITPDVVAAHGLSEEEYQRVLHALGREPNLVELGIFSVMWSEHCSYKSSRIHLKKLPTSAPWVICGPGENAGVIDIGDGQAAIFKMESHNHPSYIEPYQGAATGVGGILRDVFTMGARPVANMNALRFGRPDHPKMKHLVQGVVAGIGGYGNCVGVPTVGGETNFHKAYDGNILVNAMTVGVADTDKIFYSAATGLGNPIVYVGSKTGRDGIHGATMASADFDEKSDEKRPTVQVGDPFTEKLLIEACLELMATDAIVAIQDMGAAGLTSSSVEMATNGKAGIILDMDKVPCREEGMTPYEMMLSESQERMLMVLKPGKEAMAEAIFRKWELDFAVIGEVTDTGHMVLKFQGETVCDIPLGPLAEDAPLYDRPALSLADYKAWANVAPLGTVPESTDLGADLVKLIGCPDLANRRWIFEQYDSQVGADTLQKSGGDAAVVRIHGTSKALAISTDCTPRYCYADPYEGGKQAVAETWRNICAVGARPLAITNCLNFANPQRPEIMAQIVQALNGMGDACRALDYPIVSGNVSLYNESKATGGGSAILPTPAIGGVGLMLDHEVMTTVAFKDEGDAIWLVGGEGTHLGQSLYLREIHGREDGDAPSVDLAVERRNGEQVREWIAAGRLSAVHDISDGGLLVALTEMALAGNKGCTLDIALTTAAAFGEDQSRYVVTTRAGEVLEGATRLGTVGGSQVAGVELAALREANEAFFRDWMEG</sequence>
<feature type="chain" id="PRO_0000236657" description="Phosphoribosylformylglycinamidine synthase subunit PurL">
    <location>
        <begin position="1"/>
        <end position="719"/>
    </location>
</feature>
<feature type="active site" evidence="1">
    <location>
        <position position="45"/>
    </location>
</feature>
<feature type="active site" description="Proton acceptor" evidence="1">
    <location>
        <position position="91"/>
    </location>
</feature>
<feature type="binding site" evidence="1">
    <location>
        <position position="48"/>
    </location>
    <ligand>
        <name>ATP</name>
        <dbReference type="ChEBI" id="CHEBI:30616"/>
    </ligand>
</feature>
<feature type="binding site" evidence="1">
    <location>
        <position position="87"/>
    </location>
    <ligand>
        <name>ATP</name>
        <dbReference type="ChEBI" id="CHEBI:30616"/>
    </ligand>
</feature>
<feature type="binding site" evidence="1">
    <location>
        <position position="89"/>
    </location>
    <ligand>
        <name>Mg(2+)</name>
        <dbReference type="ChEBI" id="CHEBI:18420"/>
        <label>1</label>
    </ligand>
</feature>
<feature type="binding site" evidence="1">
    <location>
        <begin position="90"/>
        <end position="93"/>
    </location>
    <ligand>
        <name>substrate</name>
    </ligand>
</feature>
<feature type="binding site" evidence="1">
    <location>
        <position position="112"/>
    </location>
    <ligand>
        <name>substrate</name>
    </ligand>
</feature>
<feature type="binding site" evidence="1">
    <location>
        <position position="113"/>
    </location>
    <ligand>
        <name>Mg(2+)</name>
        <dbReference type="ChEBI" id="CHEBI:18420"/>
        <label>2</label>
    </ligand>
</feature>
<feature type="binding site" evidence="1">
    <location>
        <position position="236"/>
    </location>
    <ligand>
        <name>substrate</name>
    </ligand>
</feature>
<feature type="binding site" evidence="1">
    <location>
        <position position="264"/>
    </location>
    <ligand>
        <name>Mg(2+)</name>
        <dbReference type="ChEBI" id="CHEBI:18420"/>
        <label>2</label>
    </ligand>
</feature>
<feature type="binding site" evidence="1">
    <location>
        <begin position="308"/>
        <end position="310"/>
    </location>
    <ligand>
        <name>substrate</name>
    </ligand>
</feature>
<feature type="binding site" evidence="1">
    <location>
        <position position="493"/>
    </location>
    <ligand>
        <name>ATP</name>
        <dbReference type="ChEBI" id="CHEBI:30616"/>
    </ligand>
</feature>
<feature type="binding site" evidence="1">
    <location>
        <position position="530"/>
    </location>
    <ligand>
        <name>ATP</name>
        <dbReference type="ChEBI" id="CHEBI:30616"/>
    </ligand>
</feature>
<feature type="binding site" evidence="1">
    <location>
        <position position="531"/>
    </location>
    <ligand>
        <name>Mg(2+)</name>
        <dbReference type="ChEBI" id="CHEBI:18420"/>
        <label>1</label>
    </ligand>
</feature>
<feature type="binding site" evidence="1">
    <location>
        <position position="533"/>
    </location>
    <ligand>
        <name>substrate</name>
    </ligand>
</feature>
<proteinExistence type="inferred from homology"/>
<gene>
    <name evidence="1" type="primary">purL</name>
    <name type="ordered locus">Saro_2256</name>
</gene>
<evidence type="ECO:0000255" key="1">
    <source>
        <dbReference type="HAMAP-Rule" id="MF_00420"/>
    </source>
</evidence>
<accession>Q2G630</accession>
<comment type="function">
    <text evidence="1">Part of the phosphoribosylformylglycinamidine synthase complex involved in the purines biosynthetic pathway. Catalyzes the ATP-dependent conversion of formylglycinamide ribonucleotide (FGAR) and glutamine to yield formylglycinamidine ribonucleotide (FGAM) and glutamate. The FGAM synthase complex is composed of three subunits. PurQ produces an ammonia molecule by converting glutamine to glutamate. PurL transfers the ammonia molecule to FGAR to form FGAM in an ATP-dependent manner. PurS interacts with PurQ and PurL and is thought to assist in the transfer of the ammonia molecule from PurQ to PurL.</text>
</comment>
<comment type="catalytic activity">
    <reaction evidence="1">
        <text>N(2)-formyl-N(1)-(5-phospho-beta-D-ribosyl)glycinamide + L-glutamine + ATP + H2O = 2-formamido-N(1)-(5-O-phospho-beta-D-ribosyl)acetamidine + L-glutamate + ADP + phosphate + H(+)</text>
        <dbReference type="Rhea" id="RHEA:17129"/>
        <dbReference type="ChEBI" id="CHEBI:15377"/>
        <dbReference type="ChEBI" id="CHEBI:15378"/>
        <dbReference type="ChEBI" id="CHEBI:29985"/>
        <dbReference type="ChEBI" id="CHEBI:30616"/>
        <dbReference type="ChEBI" id="CHEBI:43474"/>
        <dbReference type="ChEBI" id="CHEBI:58359"/>
        <dbReference type="ChEBI" id="CHEBI:147286"/>
        <dbReference type="ChEBI" id="CHEBI:147287"/>
        <dbReference type="ChEBI" id="CHEBI:456216"/>
        <dbReference type="EC" id="6.3.5.3"/>
    </reaction>
</comment>
<comment type="pathway">
    <text evidence="1">Purine metabolism; IMP biosynthesis via de novo pathway; 5-amino-1-(5-phospho-D-ribosyl)imidazole from N(2)-formyl-N(1)-(5-phospho-D-ribosyl)glycinamide: step 1/2.</text>
</comment>
<comment type="subunit">
    <text evidence="1">Monomer. Part of the FGAM synthase complex composed of 1 PurL, 1 PurQ and 2 PurS subunits.</text>
</comment>
<comment type="subcellular location">
    <subcellularLocation>
        <location evidence="1">Cytoplasm</location>
    </subcellularLocation>
</comment>
<comment type="similarity">
    <text evidence="1">Belongs to the FGAMS family.</text>
</comment>
<reference key="1">
    <citation type="submission" date="2006-01" db="EMBL/GenBank/DDBJ databases">
        <title>Complete sequence of Novosphingobium aromaticivorans DSM 12444.</title>
        <authorList>
            <consortium name="US DOE Joint Genome Institute"/>
            <person name="Copeland A."/>
            <person name="Lucas S."/>
            <person name="Lapidus A."/>
            <person name="Barry K."/>
            <person name="Detter J.C."/>
            <person name="Glavina T."/>
            <person name="Hammon N."/>
            <person name="Israni S."/>
            <person name="Pitluck S."/>
            <person name="Chain P."/>
            <person name="Malfatti S."/>
            <person name="Shin M."/>
            <person name="Vergez L."/>
            <person name="Schmutz J."/>
            <person name="Larimer F."/>
            <person name="Land M."/>
            <person name="Kyrpides N."/>
            <person name="Ivanova N."/>
            <person name="Fredrickson J."/>
            <person name="Balkwill D."/>
            <person name="Romine M.F."/>
            <person name="Richardson P."/>
        </authorList>
    </citation>
    <scope>NUCLEOTIDE SEQUENCE [LARGE SCALE GENOMIC DNA]</scope>
    <source>
        <strain>ATCC 700278 / DSM 12444 / CCUG 56034 / CIP 105152 / NBRC 16084 / F199</strain>
    </source>
</reference>
<dbReference type="EC" id="6.3.5.3" evidence="1"/>
<dbReference type="EMBL" id="CP000248">
    <property type="protein sequence ID" value="ABD26693.1"/>
    <property type="molecule type" value="Genomic_DNA"/>
</dbReference>
<dbReference type="RefSeq" id="WP_011445899.1">
    <property type="nucleotide sequence ID" value="NC_007794.1"/>
</dbReference>
<dbReference type="SMR" id="Q2G630"/>
<dbReference type="STRING" id="279238.Saro_2256"/>
<dbReference type="KEGG" id="nar:Saro_2256"/>
<dbReference type="eggNOG" id="COG0046">
    <property type="taxonomic scope" value="Bacteria"/>
</dbReference>
<dbReference type="HOGENOM" id="CLU_003100_0_1_5"/>
<dbReference type="UniPathway" id="UPA00074">
    <property type="reaction ID" value="UER00128"/>
</dbReference>
<dbReference type="Proteomes" id="UP000009134">
    <property type="component" value="Chromosome"/>
</dbReference>
<dbReference type="GO" id="GO:0005737">
    <property type="term" value="C:cytoplasm"/>
    <property type="evidence" value="ECO:0007669"/>
    <property type="project" value="UniProtKB-SubCell"/>
</dbReference>
<dbReference type="GO" id="GO:0005524">
    <property type="term" value="F:ATP binding"/>
    <property type="evidence" value="ECO:0007669"/>
    <property type="project" value="UniProtKB-UniRule"/>
</dbReference>
<dbReference type="GO" id="GO:0000287">
    <property type="term" value="F:magnesium ion binding"/>
    <property type="evidence" value="ECO:0007669"/>
    <property type="project" value="UniProtKB-UniRule"/>
</dbReference>
<dbReference type="GO" id="GO:0004642">
    <property type="term" value="F:phosphoribosylformylglycinamidine synthase activity"/>
    <property type="evidence" value="ECO:0007669"/>
    <property type="project" value="UniProtKB-UniRule"/>
</dbReference>
<dbReference type="GO" id="GO:0006189">
    <property type="term" value="P:'de novo' IMP biosynthetic process"/>
    <property type="evidence" value="ECO:0007669"/>
    <property type="project" value="UniProtKB-UniRule"/>
</dbReference>
<dbReference type="CDD" id="cd02203">
    <property type="entry name" value="PurL_repeat1"/>
    <property type="match status" value="1"/>
</dbReference>
<dbReference type="CDD" id="cd02204">
    <property type="entry name" value="PurL_repeat2"/>
    <property type="match status" value="1"/>
</dbReference>
<dbReference type="FunFam" id="3.30.1330.10:FF:000004">
    <property type="entry name" value="Phosphoribosylformylglycinamidine synthase subunit PurL"/>
    <property type="match status" value="1"/>
</dbReference>
<dbReference type="Gene3D" id="3.90.650.10">
    <property type="entry name" value="PurM-like C-terminal domain"/>
    <property type="match status" value="2"/>
</dbReference>
<dbReference type="Gene3D" id="3.30.1330.10">
    <property type="entry name" value="PurM-like, N-terminal domain"/>
    <property type="match status" value="2"/>
</dbReference>
<dbReference type="HAMAP" id="MF_00420">
    <property type="entry name" value="PurL_2"/>
    <property type="match status" value="1"/>
</dbReference>
<dbReference type="InterPro" id="IPR010074">
    <property type="entry name" value="PRibForGlyAmidine_synth_PurL"/>
</dbReference>
<dbReference type="InterPro" id="IPR041609">
    <property type="entry name" value="PurL_linker"/>
</dbReference>
<dbReference type="InterPro" id="IPR010918">
    <property type="entry name" value="PurM-like_C_dom"/>
</dbReference>
<dbReference type="InterPro" id="IPR036676">
    <property type="entry name" value="PurM-like_C_sf"/>
</dbReference>
<dbReference type="InterPro" id="IPR016188">
    <property type="entry name" value="PurM-like_N"/>
</dbReference>
<dbReference type="InterPro" id="IPR036921">
    <property type="entry name" value="PurM-like_N_sf"/>
</dbReference>
<dbReference type="NCBIfam" id="TIGR01736">
    <property type="entry name" value="FGAM_synth_II"/>
    <property type="match status" value="1"/>
</dbReference>
<dbReference type="NCBIfam" id="NF002290">
    <property type="entry name" value="PRK01213.1"/>
    <property type="match status" value="1"/>
</dbReference>
<dbReference type="PANTHER" id="PTHR43555">
    <property type="entry name" value="PHOSPHORIBOSYLFORMYLGLYCINAMIDINE SYNTHASE SUBUNIT PURL"/>
    <property type="match status" value="1"/>
</dbReference>
<dbReference type="PANTHER" id="PTHR43555:SF1">
    <property type="entry name" value="PHOSPHORIBOSYLFORMYLGLYCINAMIDINE SYNTHASE SUBUNIT PURL"/>
    <property type="match status" value="1"/>
</dbReference>
<dbReference type="Pfam" id="PF00586">
    <property type="entry name" value="AIRS"/>
    <property type="match status" value="2"/>
</dbReference>
<dbReference type="Pfam" id="PF02769">
    <property type="entry name" value="AIRS_C"/>
    <property type="match status" value="2"/>
</dbReference>
<dbReference type="Pfam" id="PF18072">
    <property type="entry name" value="FGAR-AT_linker"/>
    <property type="match status" value="1"/>
</dbReference>
<dbReference type="PIRSF" id="PIRSF001587">
    <property type="entry name" value="FGAM_synthase_II"/>
    <property type="match status" value="1"/>
</dbReference>
<dbReference type="SUPFAM" id="SSF56042">
    <property type="entry name" value="PurM C-terminal domain-like"/>
    <property type="match status" value="2"/>
</dbReference>
<dbReference type="SUPFAM" id="SSF55326">
    <property type="entry name" value="PurM N-terminal domain-like"/>
    <property type="match status" value="2"/>
</dbReference>
<protein>
    <recommendedName>
        <fullName evidence="1">Phosphoribosylformylglycinamidine synthase subunit PurL</fullName>
        <shortName evidence="1">FGAM synthase</shortName>
        <ecNumber evidence="1">6.3.5.3</ecNumber>
    </recommendedName>
    <alternativeName>
        <fullName evidence="1">Formylglycinamide ribonucleotide amidotransferase subunit II</fullName>
        <shortName evidence="1">FGAR amidotransferase II</shortName>
        <shortName evidence="1">FGAR-AT II</shortName>
    </alternativeName>
    <alternativeName>
        <fullName evidence="1">Glutamine amidotransferase PurL</fullName>
    </alternativeName>
    <alternativeName>
        <fullName evidence="1">Phosphoribosylformylglycinamidine synthase subunit II</fullName>
    </alternativeName>
</protein>